<protein>
    <recommendedName>
        <fullName>Zinc finger protein 90</fullName>
        <shortName>Zfp-90</shortName>
    </recommendedName>
</protein>
<gene>
    <name type="primary">Zfp90</name>
</gene>
<proteinExistence type="evidence at transcript level"/>
<reference key="1">
    <citation type="journal article" date="2004" name="Genome Res.">
        <title>The status, quality, and expansion of the NIH full-length cDNA project: the Mammalian Gene Collection (MGC).</title>
        <authorList>
            <consortium name="The MGC Project Team"/>
        </authorList>
    </citation>
    <scope>NUCLEOTIDE SEQUENCE [LARGE SCALE MRNA]</scope>
    <source>
        <tissue>Testis</tissue>
    </source>
</reference>
<evidence type="ECO:0000250" key="1">
    <source>
        <dbReference type="UniProtKB" id="Q61967"/>
    </source>
</evidence>
<evidence type="ECO:0000250" key="2">
    <source>
        <dbReference type="UniProtKB" id="Q8TF47"/>
    </source>
</evidence>
<evidence type="ECO:0000255" key="3">
    <source>
        <dbReference type="PROSITE-ProRule" id="PRU00042"/>
    </source>
</evidence>
<evidence type="ECO:0000255" key="4">
    <source>
        <dbReference type="PROSITE-ProRule" id="PRU00119"/>
    </source>
</evidence>
<evidence type="ECO:0000305" key="5"/>
<sequence length="633" mass="72438">MAPRPPTATPQESVTFKDVAVNFTQEEWRHVGPAQRSLYRDVMLENYSHLVSLGYQVSKPEVIFKLEQGEEPWISERELQRPFCPDWKTRPDIKSWSSQQGVSEVSHSANVWSHATFGDIWGVNTQRHQESWRRHLGPEASSQKKITALEKIAEQNKFGEDSGLSTDLVPQLDVSSSIRPSECKTFGNNLEYNSELVTQSGIPAKKKPYKCDKCRKSFIHRSSLNKHEKIHKDDAYSNGTDQGVPSGRKHHECTDCGKTFLWRTQLTEHQRIHTGEKPFECNVCGKAFRHSSSLGQHENAHTGEKPYQCSLCGKAFQRSSSLVQHQRIHTGEKPYRCNLCGRSFRHSTSLTQHEVTHSGEKPFQCKECGKAFSRCSSLVQHERTHTGEKPFECSICGRAFGQSPSLYKHMRIHKRSKPYQSNNFSIAFEPNIPLTQGESVLTDVKSYHCIDCGKDFSHITDFTEHQRIHAGENSYDSEQALRQQSLSHPREKPYQCNVCGKAFKRSTSFIEHHRIHTGEKPYECNECGEAFSRLSSLTQHERTHTGEKPYECIDCGKAFSQSSSLIQHERTHTGEKPYECNECGRAFRKKTNLHDHQRIHTGEKPYACKECGKNFSRSSALTKHHRIHSRNKL</sequence>
<name>ZFP90_RAT</name>
<feature type="chain" id="PRO_0000233977" description="Zinc finger protein 90">
    <location>
        <begin position="1"/>
        <end position="633"/>
    </location>
</feature>
<feature type="domain" description="KRAB" evidence="4">
    <location>
        <begin position="14"/>
        <end position="85"/>
    </location>
</feature>
<feature type="zinc finger region" description="C2H2-type 1" evidence="3">
    <location>
        <begin position="209"/>
        <end position="231"/>
    </location>
</feature>
<feature type="zinc finger region" description="C2H2-type 2" evidence="3">
    <location>
        <begin position="251"/>
        <end position="273"/>
    </location>
</feature>
<feature type="zinc finger region" description="C2H2-type 3" evidence="3">
    <location>
        <begin position="279"/>
        <end position="301"/>
    </location>
</feature>
<feature type="zinc finger region" description="C2H2-type 4" evidence="3">
    <location>
        <begin position="307"/>
        <end position="329"/>
    </location>
</feature>
<feature type="zinc finger region" description="C2H2-type 5" evidence="3">
    <location>
        <begin position="335"/>
        <end position="357"/>
    </location>
</feature>
<feature type="zinc finger region" description="C2H2-type 6" evidence="3">
    <location>
        <begin position="363"/>
        <end position="385"/>
    </location>
</feature>
<feature type="zinc finger region" description="C2H2-type 7" evidence="3">
    <location>
        <begin position="391"/>
        <end position="413"/>
    </location>
</feature>
<feature type="zinc finger region" description="C2H2-type 8" evidence="3">
    <location>
        <begin position="447"/>
        <end position="469"/>
    </location>
</feature>
<feature type="zinc finger region" description="C2H2-type 9" evidence="3">
    <location>
        <begin position="494"/>
        <end position="516"/>
    </location>
</feature>
<feature type="zinc finger region" description="C2H2-type 10" evidence="3">
    <location>
        <begin position="522"/>
        <end position="544"/>
    </location>
</feature>
<feature type="zinc finger region" description="C2H2-type 11" evidence="3">
    <location>
        <begin position="550"/>
        <end position="572"/>
    </location>
</feature>
<feature type="zinc finger region" description="C2H2-type 12" evidence="3">
    <location>
        <begin position="578"/>
        <end position="600"/>
    </location>
</feature>
<feature type="zinc finger region" description="C2H2-type 13" evidence="3">
    <location>
        <begin position="606"/>
        <end position="628"/>
    </location>
</feature>
<feature type="cross-link" description="Glycyl lysine isopeptide (Lys-Gly) (interchain with G-Cter in SUMO2)" evidence="2">
    <location>
        <position position="445"/>
    </location>
</feature>
<accession>Q4V8A8</accession>
<dbReference type="EMBL" id="BC097467">
    <property type="protein sequence ID" value="AAH97467.1"/>
    <property type="molecule type" value="mRNA"/>
</dbReference>
<dbReference type="RefSeq" id="NP_001020936.1">
    <property type="nucleotide sequence ID" value="NM_001025765.2"/>
</dbReference>
<dbReference type="RefSeq" id="XP_017456837.1">
    <property type="nucleotide sequence ID" value="XM_017601348.1"/>
</dbReference>
<dbReference type="SMR" id="Q4V8A8"/>
<dbReference type="FunCoup" id="Q4V8A8">
    <property type="interactions" value="21"/>
</dbReference>
<dbReference type="STRING" id="10116.ENSRNOP00000027209"/>
<dbReference type="iPTMnet" id="Q4V8A8"/>
<dbReference type="PhosphoSitePlus" id="Q4V8A8"/>
<dbReference type="PaxDb" id="10116-ENSRNOP00000027209"/>
<dbReference type="GeneID" id="498945"/>
<dbReference type="KEGG" id="rno:498945"/>
<dbReference type="UCSC" id="RGD:1563077">
    <property type="organism name" value="rat"/>
</dbReference>
<dbReference type="AGR" id="RGD:1563077"/>
<dbReference type="CTD" id="146198"/>
<dbReference type="RGD" id="1563077">
    <property type="gene designation" value="Zfp90"/>
</dbReference>
<dbReference type="VEuPathDB" id="HostDB:ENSRNOG00000020087"/>
<dbReference type="eggNOG" id="KOG1721">
    <property type="taxonomic scope" value="Eukaryota"/>
</dbReference>
<dbReference type="HOGENOM" id="CLU_002678_44_5_1"/>
<dbReference type="InParanoid" id="Q4V8A8"/>
<dbReference type="OrthoDB" id="4880at9989"/>
<dbReference type="PhylomeDB" id="Q4V8A8"/>
<dbReference type="TreeFam" id="TF350822"/>
<dbReference type="Reactome" id="R-RNO-212436">
    <property type="pathway name" value="Generic Transcription Pathway"/>
</dbReference>
<dbReference type="PRO" id="PR:Q4V8A8"/>
<dbReference type="Proteomes" id="UP000002494">
    <property type="component" value="Chromosome 19"/>
</dbReference>
<dbReference type="Bgee" id="ENSRNOG00000020087">
    <property type="expression patterns" value="Expressed in cerebellum and 19 other cell types or tissues"/>
</dbReference>
<dbReference type="ExpressionAtlas" id="Q4V8A8">
    <property type="expression patterns" value="baseline and differential"/>
</dbReference>
<dbReference type="GO" id="GO:0005634">
    <property type="term" value="C:nucleus"/>
    <property type="evidence" value="ECO:0000266"/>
    <property type="project" value="RGD"/>
</dbReference>
<dbReference type="GO" id="GO:0003677">
    <property type="term" value="F:DNA binding"/>
    <property type="evidence" value="ECO:0000266"/>
    <property type="project" value="RGD"/>
</dbReference>
<dbReference type="GO" id="GO:0000981">
    <property type="term" value="F:DNA-binding transcription factor activity, RNA polymerase II-specific"/>
    <property type="evidence" value="ECO:0000318"/>
    <property type="project" value="GO_Central"/>
</dbReference>
<dbReference type="GO" id="GO:0001227">
    <property type="term" value="F:DNA-binding transcription repressor activity, RNA polymerase II-specific"/>
    <property type="evidence" value="ECO:0000266"/>
    <property type="project" value="RGD"/>
</dbReference>
<dbReference type="GO" id="GO:0000977">
    <property type="term" value="F:RNA polymerase II transcription regulatory region sequence-specific DNA binding"/>
    <property type="evidence" value="ECO:0000318"/>
    <property type="project" value="GO_Central"/>
</dbReference>
<dbReference type="GO" id="GO:0008270">
    <property type="term" value="F:zinc ion binding"/>
    <property type="evidence" value="ECO:0007669"/>
    <property type="project" value="UniProtKB-KW"/>
</dbReference>
<dbReference type="GO" id="GO:0045892">
    <property type="term" value="P:negative regulation of DNA-templated transcription"/>
    <property type="evidence" value="ECO:0000266"/>
    <property type="project" value="RGD"/>
</dbReference>
<dbReference type="GO" id="GO:0000122">
    <property type="term" value="P:negative regulation of transcription by RNA polymerase II"/>
    <property type="evidence" value="ECO:0000266"/>
    <property type="project" value="RGD"/>
</dbReference>
<dbReference type="GO" id="GO:0045893">
    <property type="term" value="P:positive regulation of DNA-templated transcription"/>
    <property type="evidence" value="ECO:0000315"/>
    <property type="project" value="UniProtKB"/>
</dbReference>
<dbReference type="GO" id="GO:0006357">
    <property type="term" value="P:regulation of transcription by RNA polymerase II"/>
    <property type="evidence" value="ECO:0000318"/>
    <property type="project" value="GO_Central"/>
</dbReference>
<dbReference type="CDD" id="cd07765">
    <property type="entry name" value="KRAB_A-box"/>
    <property type="match status" value="1"/>
</dbReference>
<dbReference type="FunFam" id="3.30.160.60:FF:004691">
    <property type="match status" value="1"/>
</dbReference>
<dbReference type="FunFam" id="3.30.160.60:FF:000325">
    <property type="entry name" value="ZFP90 zinc finger protein"/>
    <property type="match status" value="1"/>
</dbReference>
<dbReference type="FunFam" id="3.30.160.60:FF:000557">
    <property type="entry name" value="zinc finger and SCAN domain-containing protein 29"/>
    <property type="match status" value="1"/>
</dbReference>
<dbReference type="FunFam" id="3.30.160.60:FF:002343">
    <property type="entry name" value="Zinc finger protein 33A"/>
    <property type="match status" value="1"/>
</dbReference>
<dbReference type="FunFam" id="3.30.160.60:FF:000338">
    <property type="entry name" value="zinc finger protein 383"/>
    <property type="match status" value="1"/>
</dbReference>
<dbReference type="FunFam" id="3.30.160.60:FF:002254">
    <property type="entry name" value="Zinc finger protein 540"/>
    <property type="match status" value="1"/>
</dbReference>
<dbReference type="FunFam" id="3.30.160.60:FF:000052">
    <property type="entry name" value="zinc finger protein 546 isoform X1"/>
    <property type="match status" value="1"/>
</dbReference>
<dbReference type="FunFam" id="3.30.160.60:FF:001157">
    <property type="entry name" value="Zinc finger protein 793"/>
    <property type="match status" value="1"/>
</dbReference>
<dbReference type="FunFam" id="3.30.160.60:FF:000485">
    <property type="entry name" value="Zinc finger protein 90 homolog"/>
    <property type="match status" value="1"/>
</dbReference>
<dbReference type="FunFam" id="3.30.160.60:FF:000568">
    <property type="entry name" value="zinc finger protein 90 homolog"/>
    <property type="match status" value="2"/>
</dbReference>
<dbReference type="FunFam" id="3.30.160.60:FF:000934">
    <property type="entry name" value="zinc finger protein 90 homolog"/>
    <property type="match status" value="2"/>
</dbReference>
<dbReference type="Gene3D" id="6.10.140.140">
    <property type="match status" value="1"/>
</dbReference>
<dbReference type="Gene3D" id="3.30.160.60">
    <property type="entry name" value="Classic Zinc Finger"/>
    <property type="match status" value="13"/>
</dbReference>
<dbReference type="InterPro" id="IPR001909">
    <property type="entry name" value="KRAB"/>
</dbReference>
<dbReference type="InterPro" id="IPR036051">
    <property type="entry name" value="KRAB_dom_sf"/>
</dbReference>
<dbReference type="InterPro" id="IPR036236">
    <property type="entry name" value="Znf_C2H2_sf"/>
</dbReference>
<dbReference type="InterPro" id="IPR013087">
    <property type="entry name" value="Znf_C2H2_type"/>
</dbReference>
<dbReference type="PANTHER" id="PTHR23226">
    <property type="entry name" value="ZINC FINGER AND SCAN DOMAIN-CONTAINING"/>
    <property type="match status" value="1"/>
</dbReference>
<dbReference type="PANTHER" id="PTHR23226:SF366">
    <property type="entry name" value="ZINC FINGER PROTEIN ZFP2"/>
    <property type="match status" value="1"/>
</dbReference>
<dbReference type="Pfam" id="PF01352">
    <property type="entry name" value="KRAB"/>
    <property type="match status" value="1"/>
</dbReference>
<dbReference type="Pfam" id="PF00096">
    <property type="entry name" value="zf-C2H2"/>
    <property type="match status" value="11"/>
</dbReference>
<dbReference type="SMART" id="SM00349">
    <property type="entry name" value="KRAB"/>
    <property type="match status" value="1"/>
</dbReference>
<dbReference type="SMART" id="SM00355">
    <property type="entry name" value="ZnF_C2H2"/>
    <property type="match status" value="13"/>
</dbReference>
<dbReference type="SUPFAM" id="SSF57667">
    <property type="entry name" value="beta-beta-alpha zinc fingers"/>
    <property type="match status" value="8"/>
</dbReference>
<dbReference type="SUPFAM" id="SSF109640">
    <property type="entry name" value="KRAB domain (Kruppel-associated box)"/>
    <property type="match status" value="1"/>
</dbReference>
<dbReference type="PROSITE" id="PS50805">
    <property type="entry name" value="KRAB"/>
    <property type="match status" value="1"/>
</dbReference>
<dbReference type="PROSITE" id="PS00028">
    <property type="entry name" value="ZINC_FINGER_C2H2_1"/>
    <property type="match status" value="13"/>
</dbReference>
<dbReference type="PROSITE" id="PS50157">
    <property type="entry name" value="ZINC_FINGER_C2H2_2"/>
    <property type="match status" value="13"/>
</dbReference>
<comment type="function">
    <text evidence="1">Inhibits the transcriptional repressor activity of REST by inhibiting its binding to DNA, thereby derepressing transcription of REST target genes.</text>
</comment>
<comment type="subunit">
    <text evidence="1">Interacts (via N- and C-termini) with REST (via zinc-finger DNA-binding domain); the interaction inhibits REST repressor activity.</text>
</comment>
<comment type="subcellular location">
    <subcellularLocation>
        <location evidence="1">Nucleus</location>
    </subcellularLocation>
    <text evidence="1">Colocalizes with REST in the nucleus.</text>
</comment>
<comment type="similarity">
    <text evidence="5">Belongs to the krueppel C2H2-type zinc-finger protein family.</text>
</comment>
<keyword id="KW-0238">DNA-binding</keyword>
<keyword id="KW-1017">Isopeptide bond</keyword>
<keyword id="KW-0479">Metal-binding</keyword>
<keyword id="KW-0539">Nucleus</keyword>
<keyword id="KW-1185">Reference proteome</keyword>
<keyword id="KW-0677">Repeat</keyword>
<keyword id="KW-0678">Repressor</keyword>
<keyword id="KW-0804">Transcription</keyword>
<keyword id="KW-0805">Transcription regulation</keyword>
<keyword id="KW-0832">Ubl conjugation</keyword>
<keyword id="KW-0862">Zinc</keyword>
<keyword id="KW-0863">Zinc-finger</keyword>
<organism>
    <name type="scientific">Rattus norvegicus</name>
    <name type="common">Rat</name>
    <dbReference type="NCBI Taxonomy" id="10116"/>
    <lineage>
        <taxon>Eukaryota</taxon>
        <taxon>Metazoa</taxon>
        <taxon>Chordata</taxon>
        <taxon>Craniata</taxon>
        <taxon>Vertebrata</taxon>
        <taxon>Euteleostomi</taxon>
        <taxon>Mammalia</taxon>
        <taxon>Eutheria</taxon>
        <taxon>Euarchontoglires</taxon>
        <taxon>Glires</taxon>
        <taxon>Rodentia</taxon>
        <taxon>Myomorpha</taxon>
        <taxon>Muroidea</taxon>
        <taxon>Muridae</taxon>
        <taxon>Murinae</taxon>
        <taxon>Rattus</taxon>
    </lineage>
</organism>